<keyword id="KW-0175">Coiled coil</keyword>
<keyword id="KW-0256">Endoplasmic reticulum</keyword>
<keyword id="KW-0342">GTP-binding</keyword>
<keyword id="KW-0378">Hydrolase</keyword>
<keyword id="KW-0472">Membrane</keyword>
<keyword id="KW-0547">Nucleotide-binding</keyword>
<keyword id="KW-1185">Reference proteome</keyword>
<keyword id="KW-0812">Transmembrane</keyword>
<keyword id="KW-1133">Transmembrane helix</keyword>
<proteinExistence type="evidence at transcript level"/>
<comment type="function">
    <text evidence="1">Probable GTP-binding protein that may be involved in cell development.</text>
</comment>
<comment type="subcellular location">
    <subcellularLocation>
        <location evidence="1">Endoplasmic reticulum membrane</location>
        <topology evidence="1">Multi-pass membrane protein</topology>
    </subcellularLocation>
</comment>
<comment type="tissue specificity">
    <text evidence="4">Expressed in roots, leaves, stems and flowers.</text>
</comment>
<comment type="similarity">
    <text evidence="2">Belongs to the TRAFAC class dynamin-like GTPase superfamily. GB1/RHD3 GTPase family. RHD3 subfamily.</text>
</comment>
<accession>Q9FKE9</accession>
<feature type="chain" id="PRO_0000407756" description="Protein ROOT HAIR DEFECTIVE 3 homolog 2">
    <location>
        <begin position="1"/>
        <end position="834"/>
    </location>
</feature>
<feature type="topological domain" description="Cytoplasmic" evidence="1">
    <location>
        <begin position="1"/>
        <end position="683"/>
    </location>
</feature>
<feature type="transmembrane region" description="Helical" evidence="1">
    <location>
        <begin position="684"/>
        <end position="704"/>
    </location>
</feature>
<feature type="topological domain" description="Lumenal" evidence="1">
    <location>
        <begin position="705"/>
        <end position="707"/>
    </location>
</feature>
<feature type="transmembrane region" description="Helical" evidence="1">
    <location>
        <begin position="708"/>
        <end position="728"/>
    </location>
</feature>
<feature type="topological domain" description="Cytoplasmic" evidence="1">
    <location>
        <begin position="729"/>
        <end position="834"/>
    </location>
</feature>
<feature type="domain" description="GB1/RHD3-type G" evidence="2">
    <location>
        <begin position="37"/>
        <end position="252"/>
    </location>
</feature>
<feature type="region of interest" description="Disordered" evidence="3">
    <location>
        <begin position="767"/>
        <end position="834"/>
    </location>
</feature>
<feature type="coiled-coil region" evidence="1">
    <location>
        <begin position="214"/>
        <end position="241"/>
    </location>
</feature>
<feature type="compositionally biased region" description="Polar residues" evidence="3">
    <location>
        <begin position="767"/>
        <end position="783"/>
    </location>
</feature>
<feature type="compositionally biased region" description="Low complexity" evidence="3">
    <location>
        <begin position="784"/>
        <end position="803"/>
    </location>
</feature>
<feature type="compositionally biased region" description="Polar residues" evidence="3">
    <location>
        <begin position="823"/>
        <end position="834"/>
    </location>
</feature>
<feature type="binding site" evidence="1">
    <location>
        <begin position="47"/>
        <end position="54"/>
    </location>
    <ligand>
        <name>GTP</name>
        <dbReference type="ChEBI" id="CHEBI:37565"/>
    </ligand>
</feature>
<sequence length="834" mass="93570">MGENDDGCSTQLIDGNGEFNVKGLDNFVKKTKLSDCGLSYAVVAIMGPQSSGKSTLLNHLFKTSFREMDAFAGRSQTTKGIWMARCVGIEPFTIAMDLEGTDGRERGEDDTTFEKQSALFAIAVADIVLINMWCHDIGREQAANKPLLKTVFQVMLRLFSPRKTTLLFVIRDKTKTPIELLERALREDIQKIWDSVRKPEAHKNTPLNEFFNVMIVALSSYEEKEKQFEQEVAELRQRFFHSISPGGLAGDRRGVVPASGFSFSSQQIWKVIKENRDLDLPAHKVMVATVRCEEIANEKLRDLATNESWLELHEAAEGGLVPGFGKKLSSILEKYFSEYDAEAIYFDEGVRKEKRLQLKLNALDFVYPSYATMLGHLRSNALESFKIRLEQSLNQGEGFAKAVRDSQQSCLMVFDKGCEDAAVKQATWDASKIREKLCRDIDAHTFFARSAKLSELTANYEKRLTQALSEPVESLFEAGGKETWPSIRKLLKRETETAVTDFLDVVTGFELDHAKIDAMVQNLKNYSQSLVEKKAREEAAKILIRMKDRFSTVFSHDKDSMPRVWTGKEDIRAITKDARAEALSLLSVMTAIRLDERPDNIESTLFSSLMDGTVSAASSHNRSVGTSTDPLASSSWEEVPPNNILLTPVQCKSLWRQFKSETEYTVTQAISAQEAHKRNNNWLPPAWAIVLMIVLGFNEFMMLLKNPLYLLGFFVAFLLSKALWVQLDIPREFQHGAVAGVLSITSKFLPTVMNLLRKLAEEAQGKTTQEVPDLSASQTYRQQSPSHSISSTISESVASNISSAGDDAEYSSPSPALVRRRNTNNVQESEISQM</sequence>
<gene>
    <name type="ordered locus">At5g45160</name>
    <name type="ORF">K18C1.4</name>
</gene>
<dbReference type="EC" id="3.6.5.-" evidence="1"/>
<dbReference type="EMBL" id="AB012240">
    <property type="protein sequence ID" value="BAB11389.1"/>
    <property type="molecule type" value="Genomic_DNA"/>
</dbReference>
<dbReference type="EMBL" id="CP002688">
    <property type="protein sequence ID" value="AED95211.1"/>
    <property type="molecule type" value="Genomic_DNA"/>
</dbReference>
<dbReference type="RefSeq" id="NP_199329.1">
    <property type="nucleotide sequence ID" value="NM_123884.4"/>
</dbReference>
<dbReference type="SMR" id="Q9FKE9"/>
<dbReference type="FunCoup" id="Q9FKE9">
    <property type="interactions" value="1144"/>
</dbReference>
<dbReference type="STRING" id="3702.Q9FKE9"/>
<dbReference type="iPTMnet" id="Q9FKE9"/>
<dbReference type="PaxDb" id="3702-AT5G45160.1"/>
<dbReference type="ProteomicsDB" id="236174"/>
<dbReference type="EnsemblPlants" id="AT5G45160.1">
    <property type="protein sequence ID" value="AT5G45160.1"/>
    <property type="gene ID" value="AT5G45160"/>
</dbReference>
<dbReference type="GeneID" id="834552"/>
<dbReference type="Gramene" id="AT5G45160.1">
    <property type="protein sequence ID" value="AT5G45160.1"/>
    <property type="gene ID" value="AT5G45160"/>
</dbReference>
<dbReference type="KEGG" id="ath:AT5G45160"/>
<dbReference type="Araport" id="AT5G45160"/>
<dbReference type="TAIR" id="AT5G45160">
    <property type="gene designation" value="RL2"/>
</dbReference>
<dbReference type="eggNOG" id="KOG2203">
    <property type="taxonomic scope" value="Eukaryota"/>
</dbReference>
<dbReference type="HOGENOM" id="CLU_011270_1_0_1"/>
<dbReference type="InParanoid" id="Q9FKE9"/>
<dbReference type="OMA" id="WAIVLMI"/>
<dbReference type="PhylomeDB" id="Q9FKE9"/>
<dbReference type="PRO" id="PR:Q9FKE9"/>
<dbReference type="Proteomes" id="UP000006548">
    <property type="component" value="Chromosome 5"/>
</dbReference>
<dbReference type="ExpressionAtlas" id="Q9FKE9">
    <property type="expression patterns" value="baseline and differential"/>
</dbReference>
<dbReference type="GO" id="GO:0005783">
    <property type="term" value="C:endoplasmic reticulum"/>
    <property type="evidence" value="ECO:0007005"/>
    <property type="project" value="TAIR"/>
</dbReference>
<dbReference type="GO" id="GO:0005789">
    <property type="term" value="C:endoplasmic reticulum membrane"/>
    <property type="evidence" value="ECO:0007669"/>
    <property type="project" value="UniProtKB-SubCell"/>
</dbReference>
<dbReference type="GO" id="GO:0005525">
    <property type="term" value="F:GTP binding"/>
    <property type="evidence" value="ECO:0007669"/>
    <property type="project" value="UniProtKB-UniRule"/>
</dbReference>
<dbReference type="GO" id="GO:0003924">
    <property type="term" value="F:GTPase activity"/>
    <property type="evidence" value="ECO:0007669"/>
    <property type="project" value="UniProtKB-UniRule"/>
</dbReference>
<dbReference type="CDD" id="cd01851">
    <property type="entry name" value="GBP"/>
    <property type="match status" value="1"/>
</dbReference>
<dbReference type="FunFam" id="3.40.50.300:FF:002271">
    <property type="entry name" value="Protein ROOT HAIR DEFECTIVE 3 homolog"/>
    <property type="match status" value="1"/>
</dbReference>
<dbReference type="Gene3D" id="3.40.50.300">
    <property type="entry name" value="P-loop containing nucleotide triphosphate hydrolases"/>
    <property type="match status" value="1"/>
</dbReference>
<dbReference type="HAMAP" id="MF_03109">
    <property type="entry name" value="Sey1"/>
    <property type="match status" value="1"/>
</dbReference>
<dbReference type="InterPro" id="IPR030386">
    <property type="entry name" value="G_GB1_RHD3_dom"/>
</dbReference>
<dbReference type="InterPro" id="IPR027417">
    <property type="entry name" value="P-loop_NTPase"/>
</dbReference>
<dbReference type="InterPro" id="IPR008803">
    <property type="entry name" value="RHD3/Sey1"/>
</dbReference>
<dbReference type="InterPro" id="IPR046758">
    <property type="entry name" value="Sey1/RHD3-like_3HB"/>
</dbReference>
<dbReference type="PANTHER" id="PTHR45923:SF20">
    <property type="entry name" value="PROTEIN ROOT HAIR DEFECTIVE 3 HOMOLOG 2"/>
    <property type="match status" value="1"/>
</dbReference>
<dbReference type="PANTHER" id="PTHR45923">
    <property type="entry name" value="PROTEIN SEY1"/>
    <property type="match status" value="1"/>
</dbReference>
<dbReference type="Pfam" id="PF05879">
    <property type="entry name" value="RHD3_GTPase"/>
    <property type="match status" value="1"/>
</dbReference>
<dbReference type="Pfam" id="PF20428">
    <property type="entry name" value="Sey1_3HB"/>
    <property type="match status" value="1"/>
</dbReference>
<dbReference type="SUPFAM" id="SSF52540">
    <property type="entry name" value="P-loop containing nucleoside triphosphate hydrolases"/>
    <property type="match status" value="1"/>
</dbReference>
<dbReference type="PROSITE" id="PS51715">
    <property type="entry name" value="G_GB1_RHD3"/>
    <property type="match status" value="1"/>
</dbReference>
<protein>
    <recommendedName>
        <fullName evidence="1">Protein ROOT HAIR DEFECTIVE 3 homolog 2</fullName>
        <ecNumber evidence="1">3.6.5.-</ecNumber>
    </recommendedName>
    <alternativeName>
        <fullName evidence="1">Protein SEY1 homolog 3</fullName>
    </alternativeName>
</protein>
<evidence type="ECO:0000255" key="1">
    <source>
        <dbReference type="HAMAP-Rule" id="MF_03109"/>
    </source>
</evidence>
<evidence type="ECO:0000255" key="2">
    <source>
        <dbReference type="PROSITE-ProRule" id="PRU01052"/>
    </source>
</evidence>
<evidence type="ECO:0000256" key="3">
    <source>
        <dbReference type="SAM" id="MobiDB-lite"/>
    </source>
</evidence>
<evidence type="ECO:0000269" key="4">
    <source>
    </source>
</evidence>
<organism>
    <name type="scientific">Arabidopsis thaliana</name>
    <name type="common">Mouse-ear cress</name>
    <dbReference type="NCBI Taxonomy" id="3702"/>
    <lineage>
        <taxon>Eukaryota</taxon>
        <taxon>Viridiplantae</taxon>
        <taxon>Streptophyta</taxon>
        <taxon>Embryophyta</taxon>
        <taxon>Tracheophyta</taxon>
        <taxon>Spermatophyta</taxon>
        <taxon>Magnoliopsida</taxon>
        <taxon>eudicotyledons</taxon>
        <taxon>Gunneridae</taxon>
        <taxon>Pentapetalae</taxon>
        <taxon>rosids</taxon>
        <taxon>malvids</taxon>
        <taxon>Brassicales</taxon>
        <taxon>Brassicaceae</taxon>
        <taxon>Camelineae</taxon>
        <taxon>Arabidopsis</taxon>
    </lineage>
</organism>
<name>RHD32_ARATH</name>
<reference key="1">
    <citation type="journal article" date="1998" name="DNA Res.">
        <title>Structural analysis of Arabidopsis thaliana chromosome 5. VI. Sequence features of the regions of 1,367,185 bp covered by 19 physically assigned P1 and TAC clones.</title>
        <authorList>
            <person name="Kotani H."/>
            <person name="Nakamura Y."/>
            <person name="Sato S."/>
            <person name="Asamizu E."/>
            <person name="Kaneko T."/>
            <person name="Miyajima N."/>
            <person name="Tabata S."/>
        </authorList>
    </citation>
    <scope>NUCLEOTIDE SEQUENCE [LARGE SCALE GENOMIC DNA]</scope>
    <source>
        <strain>cv. Columbia</strain>
    </source>
</reference>
<reference key="2">
    <citation type="journal article" date="2017" name="Plant J.">
        <title>Araport11: a complete reannotation of the Arabidopsis thaliana reference genome.</title>
        <authorList>
            <person name="Cheng C.Y."/>
            <person name="Krishnakumar V."/>
            <person name="Chan A.P."/>
            <person name="Thibaud-Nissen F."/>
            <person name="Schobel S."/>
            <person name="Town C.D."/>
        </authorList>
    </citation>
    <scope>GENOME REANNOTATION</scope>
    <source>
        <strain>cv. Columbia</strain>
    </source>
</reference>
<reference key="3">
    <citation type="journal article" date="2003" name="Planta">
        <title>The Arabidopsis RHD3 gene is required for cell wall biosynthesis and actin organization.</title>
        <authorList>
            <person name="Hu Y."/>
            <person name="Zhong R."/>
            <person name="Morrison W.H. III"/>
            <person name="Ye Z.H."/>
        </authorList>
    </citation>
    <scope>TISSUE SPECIFICITY</scope>
</reference>